<accession>Q5R894</accession>
<keyword id="KW-1015">Disulfide bond</keyword>
<keyword id="KW-0325">Glycoprotein</keyword>
<keyword id="KW-0345">HDL</keyword>
<keyword id="KW-0445">Lipid transport</keyword>
<keyword id="KW-1185">Reference proteome</keyword>
<keyword id="KW-0964">Secreted</keyword>
<keyword id="KW-0732">Signal</keyword>
<keyword id="KW-0813">Transport</keyword>
<protein>
    <recommendedName>
        <fullName>Apolipoprotein M</fullName>
        <shortName>Apo-M</shortName>
        <shortName>ApoM</shortName>
    </recommendedName>
</protein>
<dbReference type="EMBL" id="CR859860">
    <property type="protein sequence ID" value="CAH92016.1"/>
    <property type="molecule type" value="mRNA"/>
</dbReference>
<dbReference type="RefSeq" id="NP_001126170.1">
    <property type="nucleotide sequence ID" value="NM_001132698.1"/>
</dbReference>
<dbReference type="SMR" id="Q5R894"/>
<dbReference type="FunCoup" id="Q5R894">
    <property type="interactions" value="46"/>
</dbReference>
<dbReference type="STRING" id="9601.ENSPPYP00000018389"/>
<dbReference type="GlyCosmos" id="Q5R894">
    <property type="glycosylation" value="1 site, No reported glycans"/>
</dbReference>
<dbReference type="Ensembl" id="ENSPPYT00000051584.1">
    <property type="protein sequence ID" value="ENSPPYP00000039558.1"/>
    <property type="gene ID" value="ENSPPYG00000035537.1"/>
</dbReference>
<dbReference type="GeneID" id="100173132"/>
<dbReference type="KEGG" id="pon:100173132"/>
<dbReference type="CTD" id="55937"/>
<dbReference type="eggNOG" id="ENOG502S2IN">
    <property type="taxonomic scope" value="Eukaryota"/>
</dbReference>
<dbReference type="GeneTree" id="ENSGT00390000001026"/>
<dbReference type="HOGENOM" id="CLU_105274_0_0_1"/>
<dbReference type="InParanoid" id="Q5R894"/>
<dbReference type="OMA" id="SGKWANC"/>
<dbReference type="OrthoDB" id="9944312at2759"/>
<dbReference type="TreeFam" id="TF330771"/>
<dbReference type="Proteomes" id="UP000001595">
    <property type="component" value="Chromosome 6"/>
</dbReference>
<dbReference type="GO" id="GO:0034364">
    <property type="term" value="C:high-density lipoprotein particle"/>
    <property type="evidence" value="ECO:0007669"/>
    <property type="project" value="UniProtKB-KW"/>
</dbReference>
<dbReference type="GO" id="GO:0034362">
    <property type="term" value="C:low-density lipoprotein particle"/>
    <property type="evidence" value="ECO:0007669"/>
    <property type="project" value="TreeGrafter"/>
</dbReference>
<dbReference type="GO" id="GO:0034361">
    <property type="term" value="C:very-low-density lipoprotein particle"/>
    <property type="evidence" value="ECO:0007669"/>
    <property type="project" value="TreeGrafter"/>
</dbReference>
<dbReference type="GO" id="GO:0005319">
    <property type="term" value="F:lipid transporter activity"/>
    <property type="evidence" value="ECO:0007669"/>
    <property type="project" value="TreeGrafter"/>
</dbReference>
<dbReference type="GO" id="GO:0005543">
    <property type="term" value="F:phospholipid binding"/>
    <property type="evidence" value="ECO:0007669"/>
    <property type="project" value="TreeGrafter"/>
</dbReference>
<dbReference type="GO" id="GO:0033344">
    <property type="term" value="P:cholesterol efflux"/>
    <property type="evidence" value="ECO:0007669"/>
    <property type="project" value="TreeGrafter"/>
</dbReference>
<dbReference type="GO" id="GO:0034380">
    <property type="term" value="P:high-density lipoprotein particle assembly"/>
    <property type="evidence" value="ECO:0007669"/>
    <property type="project" value="TreeGrafter"/>
</dbReference>
<dbReference type="GO" id="GO:0034384">
    <property type="term" value="P:high-density lipoprotein particle clearance"/>
    <property type="evidence" value="ECO:0007669"/>
    <property type="project" value="TreeGrafter"/>
</dbReference>
<dbReference type="GO" id="GO:0034375">
    <property type="term" value="P:high-density lipoprotein particle remodeling"/>
    <property type="evidence" value="ECO:0007669"/>
    <property type="project" value="TreeGrafter"/>
</dbReference>
<dbReference type="CDD" id="cd19450">
    <property type="entry name" value="lipocalin_ApoM"/>
    <property type="match status" value="1"/>
</dbReference>
<dbReference type="FunFam" id="2.40.128.20:FF:000011">
    <property type="entry name" value="Apolipoprotein M"/>
    <property type="match status" value="1"/>
</dbReference>
<dbReference type="Gene3D" id="2.40.128.20">
    <property type="match status" value="1"/>
</dbReference>
<dbReference type="InterPro" id="IPR022734">
    <property type="entry name" value="ApoM"/>
</dbReference>
<dbReference type="InterPro" id="IPR012674">
    <property type="entry name" value="Calycin"/>
</dbReference>
<dbReference type="PANTHER" id="PTHR32028">
    <property type="entry name" value="APOLIPOPROTEIN M"/>
    <property type="match status" value="1"/>
</dbReference>
<dbReference type="PANTHER" id="PTHR32028:SF1">
    <property type="entry name" value="APOLIPOPROTEIN M"/>
    <property type="match status" value="1"/>
</dbReference>
<dbReference type="Pfam" id="PF11032">
    <property type="entry name" value="ApoM"/>
    <property type="match status" value="1"/>
</dbReference>
<dbReference type="SUPFAM" id="SSF50814">
    <property type="entry name" value="Lipocalins"/>
    <property type="match status" value="1"/>
</dbReference>
<reference key="1">
    <citation type="submission" date="2004-11" db="EMBL/GenBank/DDBJ databases">
        <authorList>
            <consortium name="The German cDNA consortium"/>
        </authorList>
    </citation>
    <scope>NUCLEOTIDE SEQUENCE [LARGE SCALE MRNA]</scope>
    <source>
        <tissue>Kidney</tissue>
    </source>
</reference>
<evidence type="ECO:0000250" key="1"/>
<evidence type="ECO:0000250" key="2">
    <source>
        <dbReference type="UniProtKB" id="O95445"/>
    </source>
</evidence>
<evidence type="ECO:0000250" key="3">
    <source>
        <dbReference type="UniProtKB" id="Q9Z1R3"/>
    </source>
</evidence>
<evidence type="ECO:0000255" key="4"/>
<evidence type="ECO:0000305" key="5"/>
<gene>
    <name type="primary">APOM</name>
</gene>
<proteinExistence type="evidence at transcript level"/>
<comment type="function">
    <text evidence="1">Probably involved in lipid transport. Can bind sphingosine-1-phosphate, myristic acid, palmitic acid and stearic acid, retinol, all-trans-retinoic acid and 9-cis-retinoic acid (By similarity).</text>
</comment>
<comment type="subunit">
    <text evidence="3">Interacts with LRP2; LRP2 mediates APOM renal uptake and subsequent lysosomal degradation.</text>
</comment>
<comment type="subcellular location">
    <subcellularLocation>
        <location evidence="1">Secreted</location>
    </subcellularLocation>
    <text evidence="1">Present in high density lipoprotein (HDL) and to a lesser extent in triglyceride-rich lipoproteins (TGRLP) and low density lipoproteins (LDL).</text>
</comment>
<comment type="similarity">
    <text evidence="5">Belongs to the calycin superfamily. Lipocalin family. Highly divergent.</text>
</comment>
<feature type="chain" id="PRO_0000223280" description="Apolipoprotein M">
    <location>
        <begin position="1"/>
        <end position="188"/>
    </location>
</feature>
<feature type="signal peptide" description="Not cleaved" evidence="1">
    <location>
        <begin position="1"/>
        <end position="22" status="uncertain"/>
    </location>
</feature>
<feature type="binding site" evidence="2">
    <location>
        <position position="136"/>
    </location>
    <ligand>
        <name>tetradecanoate</name>
        <dbReference type="ChEBI" id="CHEBI:30807"/>
    </ligand>
</feature>
<feature type="binding site" evidence="2">
    <location>
        <position position="143"/>
    </location>
    <ligand>
        <name>tetradecanoate</name>
        <dbReference type="ChEBI" id="CHEBI:30807"/>
    </ligand>
</feature>
<feature type="glycosylation site" description="N-linked (GlcNAc...) asparagine" evidence="4">
    <location>
        <position position="135"/>
    </location>
</feature>
<feature type="disulfide bond" evidence="1">
    <location>
        <begin position="23"/>
        <end position="167"/>
    </location>
</feature>
<feature type="disulfide bond" evidence="1">
    <location>
        <begin position="95"/>
        <end position="183"/>
    </location>
</feature>
<feature type="disulfide bond" evidence="1">
    <location>
        <begin position="128"/>
        <end position="157"/>
    </location>
</feature>
<name>APOM_PONAB</name>
<sequence length="188" mass="21244">MFHQIWAALLYFYGIILNSIYQCPEHSQLTTLGVDGKEFPEVHLGQWYFIAGAAPTKEELATFDPVDNIIFNMAAGSAPTQLHLRATIRMKDGLCVPRKWIYHLTEGSTDLRTEGRPDMKTELFSSSCPGGIMLNETGQGYQRFLFYNRSPHPPEKCVEEFKSLTSCLDSKAFLLTPRNQEACELSSN</sequence>
<organism>
    <name type="scientific">Pongo abelii</name>
    <name type="common">Sumatran orangutan</name>
    <name type="synonym">Pongo pygmaeus abelii</name>
    <dbReference type="NCBI Taxonomy" id="9601"/>
    <lineage>
        <taxon>Eukaryota</taxon>
        <taxon>Metazoa</taxon>
        <taxon>Chordata</taxon>
        <taxon>Craniata</taxon>
        <taxon>Vertebrata</taxon>
        <taxon>Euteleostomi</taxon>
        <taxon>Mammalia</taxon>
        <taxon>Eutheria</taxon>
        <taxon>Euarchontoglires</taxon>
        <taxon>Primates</taxon>
        <taxon>Haplorrhini</taxon>
        <taxon>Catarrhini</taxon>
        <taxon>Hominidae</taxon>
        <taxon>Pongo</taxon>
    </lineage>
</organism>